<proteinExistence type="evidence at transcript level"/>
<evidence type="ECO:0000255" key="1">
    <source>
        <dbReference type="PROSITE-ProRule" id="PRU00080"/>
    </source>
</evidence>
<evidence type="ECO:0000305" key="2"/>
<dbReference type="EMBL" id="AC020580">
    <property type="protein sequence ID" value="AAG51323.1"/>
    <property type="status" value="ALT_INIT"/>
    <property type="molecule type" value="Genomic_DNA"/>
</dbReference>
<dbReference type="EMBL" id="CP002686">
    <property type="protein sequence ID" value="AEE74416.1"/>
    <property type="molecule type" value="Genomic_DNA"/>
</dbReference>
<dbReference type="EMBL" id="AF370336">
    <property type="protein sequence ID" value="AAK44151.1"/>
    <property type="molecule type" value="mRNA"/>
</dbReference>
<dbReference type="EMBL" id="AY062994">
    <property type="protein sequence ID" value="AAL34168.1"/>
    <property type="molecule type" value="mRNA"/>
</dbReference>
<dbReference type="RefSeq" id="NP_566286.1">
    <property type="nucleotide sequence ID" value="NM_111533.3"/>
</dbReference>
<dbReference type="SMR" id="Q94K34"/>
<dbReference type="FunCoup" id="Q94K34">
    <property type="interactions" value="2"/>
</dbReference>
<dbReference type="PaxDb" id="3702-AT3G06570.1"/>
<dbReference type="EnsemblPlants" id="AT3G06570.1">
    <property type="protein sequence ID" value="AT3G06570.1"/>
    <property type="gene ID" value="AT3G06570"/>
</dbReference>
<dbReference type="GeneID" id="819836"/>
<dbReference type="Gramene" id="AT3G06570.1">
    <property type="protein sequence ID" value="AT3G06570.1"/>
    <property type="gene ID" value="AT3G06570"/>
</dbReference>
<dbReference type="KEGG" id="ath:AT3G06570"/>
<dbReference type="Araport" id="AT3G06570"/>
<dbReference type="TAIR" id="AT3G06570"/>
<dbReference type="eggNOG" id="KOG1072">
    <property type="taxonomic scope" value="Eukaryota"/>
</dbReference>
<dbReference type="HOGENOM" id="CLU_032521_1_2_1"/>
<dbReference type="InParanoid" id="Q94K34"/>
<dbReference type="OMA" id="WEGIACC"/>
<dbReference type="OrthoDB" id="1032823at2759"/>
<dbReference type="PhylomeDB" id="Q94K34"/>
<dbReference type="PRO" id="PR:Q94K34"/>
<dbReference type="Proteomes" id="UP000006548">
    <property type="component" value="Chromosome 3"/>
</dbReference>
<dbReference type="ExpressionAtlas" id="Q94K34">
    <property type="expression patterns" value="baseline and differential"/>
</dbReference>
<dbReference type="CDD" id="cd22152">
    <property type="entry name" value="F-box_AtAFR-like"/>
    <property type="match status" value="1"/>
</dbReference>
<dbReference type="Gene3D" id="1.20.1280.50">
    <property type="match status" value="1"/>
</dbReference>
<dbReference type="Gene3D" id="2.120.10.80">
    <property type="entry name" value="Kelch-type beta propeller"/>
    <property type="match status" value="1"/>
</dbReference>
<dbReference type="InterPro" id="IPR036047">
    <property type="entry name" value="F-box-like_dom_sf"/>
</dbReference>
<dbReference type="InterPro" id="IPR050354">
    <property type="entry name" value="F-box/kelch-repeat_ARATH"/>
</dbReference>
<dbReference type="InterPro" id="IPR001810">
    <property type="entry name" value="F-box_dom"/>
</dbReference>
<dbReference type="InterPro" id="IPR015915">
    <property type="entry name" value="Kelch-typ_b-propeller"/>
</dbReference>
<dbReference type="PANTHER" id="PTHR24414">
    <property type="entry name" value="F-BOX/KELCH-REPEAT PROTEIN SKIP4"/>
    <property type="match status" value="1"/>
</dbReference>
<dbReference type="PANTHER" id="PTHR24414:SF184">
    <property type="entry name" value="GALACTOSE OXIDASE_KELCH REPEAT SUPERFAMILY PROTEIN"/>
    <property type="match status" value="1"/>
</dbReference>
<dbReference type="Pfam" id="PF00646">
    <property type="entry name" value="F-box"/>
    <property type="match status" value="1"/>
</dbReference>
<dbReference type="Pfam" id="PF25210">
    <property type="entry name" value="Kelch_FKB95"/>
    <property type="match status" value="1"/>
</dbReference>
<dbReference type="SMART" id="SM00256">
    <property type="entry name" value="FBOX"/>
    <property type="match status" value="1"/>
</dbReference>
<dbReference type="SUPFAM" id="SSF81383">
    <property type="entry name" value="F-box domain"/>
    <property type="match status" value="1"/>
</dbReference>
<dbReference type="SUPFAM" id="SSF117281">
    <property type="entry name" value="Kelch motif"/>
    <property type="match status" value="1"/>
</dbReference>
<dbReference type="PROSITE" id="PS50181">
    <property type="entry name" value="FBOX"/>
    <property type="match status" value="1"/>
</dbReference>
<sequence length="390" mass="44558">MSSMLSPPVKKRKIVAPQSQSASASFQSLPDDLILSIVARVPRLYHRTVSLVCKSFRSLLVSPELYKARSVSGHTESCLYLSIACYPDYRMFTLCRKPDQTLTTSEEEEKKKSNGYYLAPVPDPDSHPVYFSSLVTVGSDIYNIAGSHASSNVSILDCRSNTWREAPRLGVELTSVSASVLDRKIFVVGMYADDEESESKNDFFEVLDTETHTWDPQPFNCSETKDKFLNCRTAFIDGKFLVKPWIHRGVVAYNSKESRWEPVQTKMAMSMFNDSYCQIHNVIYLAFDGRIRWYDDALNCWGDVQGLLELGNIPHGPSCVRLADYRGNIAVFWFRYLPDNDDYKWKMIWCAEIALERRTSWEIWGKVLWFDPVLTVPADYEFVKALAATV</sequence>
<protein>
    <recommendedName>
        <fullName>F-box/kelch-repeat protein At3g06570</fullName>
    </recommendedName>
</protein>
<keyword id="KW-0880">Kelch repeat</keyword>
<keyword id="KW-1185">Reference proteome</keyword>
<keyword id="KW-0677">Repeat</keyword>
<accession>Q94K34</accession>
<accession>Q9C8Z8</accession>
<feature type="chain" id="PRO_0000283211" description="F-box/kelch-repeat protein At3g06570">
    <location>
        <begin position="1"/>
        <end position="390"/>
    </location>
</feature>
<feature type="domain" description="F-box" evidence="1">
    <location>
        <begin position="23"/>
        <end position="69"/>
    </location>
</feature>
<feature type="repeat" description="Kelch 1">
    <location>
        <begin position="140"/>
        <end position="183"/>
    </location>
</feature>
<feature type="repeat" description="Kelch 2">
    <location>
        <begin position="185"/>
        <end position="234"/>
    </location>
</feature>
<feature type="repeat" description="Kelch 3">
    <location>
        <begin position="236"/>
        <end position="281"/>
    </location>
</feature>
<reference key="1">
    <citation type="journal article" date="2000" name="Nature">
        <title>Sequence and analysis of chromosome 3 of the plant Arabidopsis thaliana.</title>
        <authorList>
            <person name="Salanoubat M."/>
            <person name="Lemcke K."/>
            <person name="Rieger M."/>
            <person name="Ansorge W."/>
            <person name="Unseld M."/>
            <person name="Fartmann B."/>
            <person name="Valle G."/>
            <person name="Bloecker H."/>
            <person name="Perez-Alonso M."/>
            <person name="Obermaier B."/>
            <person name="Delseny M."/>
            <person name="Boutry M."/>
            <person name="Grivell L.A."/>
            <person name="Mache R."/>
            <person name="Puigdomenech P."/>
            <person name="De Simone V."/>
            <person name="Choisne N."/>
            <person name="Artiguenave F."/>
            <person name="Robert C."/>
            <person name="Brottier P."/>
            <person name="Wincker P."/>
            <person name="Cattolico L."/>
            <person name="Weissenbach J."/>
            <person name="Saurin W."/>
            <person name="Quetier F."/>
            <person name="Schaefer M."/>
            <person name="Mueller-Auer S."/>
            <person name="Gabel C."/>
            <person name="Fuchs M."/>
            <person name="Benes V."/>
            <person name="Wurmbach E."/>
            <person name="Drzonek H."/>
            <person name="Erfle H."/>
            <person name="Jordan N."/>
            <person name="Bangert S."/>
            <person name="Wiedelmann R."/>
            <person name="Kranz H."/>
            <person name="Voss H."/>
            <person name="Holland R."/>
            <person name="Brandt P."/>
            <person name="Nyakatura G."/>
            <person name="Vezzi A."/>
            <person name="D'Angelo M."/>
            <person name="Pallavicini A."/>
            <person name="Toppo S."/>
            <person name="Simionati B."/>
            <person name="Conrad A."/>
            <person name="Hornischer K."/>
            <person name="Kauer G."/>
            <person name="Loehnert T.-H."/>
            <person name="Nordsiek G."/>
            <person name="Reichelt J."/>
            <person name="Scharfe M."/>
            <person name="Schoen O."/>
            <person name="Bargues M."/>
            <person name="Terol J."/>
            <person name="Climent J."/>
            <person name="Navarro P."/>
            <person name="Collado C."/>
            <person name="Perez-Perez A."/>
            <person name="Ottenwaelder B."/>
            <person name="Duchemin D."/>
            <person name="Cooke R."/>
            <person name="Laudie M."/>
            <person name="Berger-Llauro C."/>
            <person name="Purnelle B."/>
            <person name="Masuy D."/>
            <person name="de Haan M."/>
            <person name="Maarse A.C."/>
            <person name="Alcaraz J.-P."/>
            <person name="Cottet A."/>
            <person name="Casacuberta E."/>
            <person name="Monfort A."/>
            <person name="Argiriou A."/>
            <person name="Flores M."/>
            <person name="Liguori R."/>
            <person name="Vitale D."/>
            <person name="Mannhaupt G."/>
            <person name="Haase D."/>
            <person name="Schoof H."/>
            <person name="Rudd S."/>
            <person name="Zaccaria P."/>
            <person name="Mewes H.-W."/>
            <person name="Mayer K.F.X."/>
            <person name="Kaul S."/>
            <person name="Town C.D."/>
            <person name="Koo H.L."/>
            <person name="Tallon L.J."/>
            <person name="Jenkins J."/>
            <person name="Rooney T."/>
            <person name="Rizzo M."/>
            <person name="Walts A."/>
            <person name="Utterback T."/>
            <person name="Fujii C.Y."/>
            <person name="Shea T.P."/>
            <person name="Creasy T.H."/>
            <person name="Haas B."/>
            <person name="Maiti R."/>
            <person name="Wu D."/>
            <person name="Peterson J."/>
            <person name="Van Aken S."/>
            <person name="Pai G."/>
            <person name="Militscher J."/>
            <person name="Sellers P."/>
            <person name="Gill J.E."/>
            <person name="Feldblyum T.V."/>
            <person name="Preuss D."/>
            <person name="Lin X."/>
            <person name="Nierman W.C."/>
            <person name="Salzberg S.L."/>
            <person name="White O."/>
            <person name="Venter J.C."/>
            <person name="Fraser C.M."/>
            <person name="Kaneko T."/>
            <person name="Nakamura Y."/>
            <person name="Sato S."/>
            <person name="Kato T."/>
            <person name="Asamizu E."/>
            <person name="Sasamoto S."/>
            <person name="Kimura T."/>
            <person name="Idesawa K."/>
            <person name="Kawashima K."/>
            <person name="Kishida Y."/>
            <person name="Kiyokawa C."/>
            <person name="Kohara M."/>
            <person name="Matsumoto M."/>
            <person name="Matsuno A."/>
            <person name="Muraki A."/>
            <person name="Nakayama S."/>
            <person name="Nakazaki N."/>
            <person name="Shinpo S."/>
            <person name="Takeuchi C."/>
            <person name="Wada T."/>
            <person name="Watanabe A."/>
            <person name="Yamada M."/>
            <person name="Yasuda M."/>
            <person name="Tabata S."/>
        </authorList>
    </citation>
    <scope>NUCLEOTIDE SEQUENCE [LARGE SCALE GENOMIC DNA]</scope>
    <source>
        <strain>cv. Columbia</strain>
    </source>
</reference>
<reference key="2">
    <citation type="journal article" date="2017" name="Plant J.">
        <title>Araport11: a complete reannotation of the Arabidopsis thaliana reference genome.</title>
        <authorList>
            <person name="Cheng C.Y."/>
            <person name="Krishnakumar V."/>
            <person name="Chan A.P."/>
            <person name="Thibaud-Nissen F."/>
            <person name="Schobel S."/>
            <person name="Town C.D."/>
        </authorList>
    </citation>
    <scope>GENOME REANNOTATION</scope>
    <source>
        <strain>cv. Columbia</strain>
    </source>
</reference>
<reference key="3">
    <citation type="journal article" date="2003" name="Science">
        <title>Empirical analysis of transcriptional activity in the Arabidopsis genome.</title>
        <authorList>
            <person name="Yamada K."/>
            <person name="Lim J."/>
            <person name="Dale J.M."/>
            <person name="Chen H."/>
            <person name="Shinn P."/>
            <person name="Palm C.J."/>
            <person name="Southwick A.M."/>
            <person name="Wu H.C."/>
            <person name="Kim C.J."/>
            <person name="Nguyen M."/>
            <person name="Pham P.K."/>
            <person name="Cheuk R.F."/>
            <person name="Karlin-Newmann G."/>
            <person name="Liu S.X."/>
            <person name="Lam B."/>
            <person name="Sakano H."/>
            <person name="Wu T."/>
            <person name="Yu G."/>
            <person name="Miranda M."/>
            <person name="Quach H.L."/>
            <person name="Tripp M."/>
            <person name="Chang C.H."/>
            <person name="Lee J.M."/>
            <person name="Toriumi M.J."/>
            <person name="Chan M.M."/>
            <person name="Tang C.C."/>
            <person name="Onodera C.S."/>
            <person name="Deng J.M."/>
            <person name="Akiyama K."/>
            <person name="Ansari Y."/>
            <person name="Arakawa T."/>
            <person name="Banh J."/>
            <person name="Banno F."/>
            <person name="Bowser L."/>
            <person name="Brooks S.Y."/>
            <person name="Carninci P."/>
            <person name="Chao Q."/>
            <person name="Choy N."/>
            <person name="Enju A."/>
            <person name="Goldsmith A.D."/>
            <person name="Gurjal M."/>
            <person name="Hansen N.F."/>
            <person name="Hayashizaki Y."/>
            <person name="Johnson-Hopson C."/>
            <person name="Hsuan V.W."/>
            <person name="Iida K."/>
            <person name="Karnes M."/>
            <person name="Khan S."/>
            <person name="Koesema E."/>
            <person name="Ishida J."/>
            <person name="Jiang P.X."/>
            <person name="Jones T."/>
            <person name="Kawai J."/>
            <person name="Kamiya A."/>
            <person name="Meyers C."/>
            <person name="Nakajima M."/>
            <person name="Narusaka M."/>
            <person name="Seki M."/>
            <person name="Sakurai T."/>
            <person name="Satou M."/>
            <person name="Tamse R."/>
            <person name="Vaysberg M."/>
            <person name="Wallender E.K."/>
            <person name="Wong C."/>
            <person name="Yamamura Y."/>
            <person name="Yuan S."/>
            <person name="Shinozaki K."/>
            <person name="Davis R.W."/>
            <person name="Theologis A."/>
            <person name="Ecker J.R."/>
        </authorList>
    </citation>
    <scope>NUCLEOTIDE SEQUENCE [LARGE SCALE MRNA]</scope>
    <source>
        <strain>cv. Columbia</strain>
    </source>
</reference>
<gene>
    <name type="ordered locus">At3g06570</name>
    <name type="ORF">F5E6.10</name>
</gene>
<organism>
    <name type="scientific">Arabidopsis thaliana</name>
    <name type="common">Mouse-ear cress</name>
    <dbReference type="NCBI Taxonomy" id="3702"/>
    <lineage>
        <taxon>Eukaryota</taxon>
        <taxon>Viridiplantae</taxon>
        <taxon>Streptophyta</taxon>
        <taxon>Embryophyta</taxon>
        <taxon>Tracheophyta</taxon>
        <taxon>Spermatophyta</taxon>
        <taxon>Magnoliopsida</taxon>
        <taxon>eudicotyledons</taxon>
        <taxon>Gunneridae</taxon>
        <taxon>Pentapetalae</taxon>
        <taxon>rosids</taxon>
        <taxon>malvids</taxon>
        <taxon>Brassicales</taxon>
        <taxon>Brassicaceae</taxon>
        <taxon>Camelineae</taxon>
        <taxon>Arabidopsis</taxon>
    </lineage>
</organism>
<name>FBK51_ARATH</name>
<comment type="sequence caution" evidence="2">
    <conflict type="erroneous initiation">
        <sequence resource="EMBL-CDS" id="AAG51323"/>
    </conflict>
</comment>